<protein>
    <recommendedName>
        <fullName>Major prion protein</fullName>
        <shortName>PrP</shortName>
    </recommendedName>
    <cdAntigenName>CD230</cdAntigenName>
</protein>
<name>PRIO_BOSGA</name>
<sequence length="264" mass="28614">MVKSHIGSWILVLFVAMWSDVGLCKKRPKPGGGWNTGGSRYPGQGSPGGNRYPPQGGGGWGQPHGGGWGQPHGGGWGQPHGGGWGQPHGGGWGQPHGGGGWGQGGTHGQWNKPSKPKTNMKHVAGAAAAGAVVGGLGGYMLGSAMSRPLIHFGSDYEDRYYRENMHRYPNQVYYRPVDQYSNQNNFVHDCVNITVKEHTVTTTTKGENFTETDIKMMERVVEQMCITQYQRESQAYYQRGASVILFSSPPVILLISFLIFLIVG</sequence>
<proteinExistence type="inferred from homology"/>
<keyword id="KW-0034">Amyloid</keyword>
<keyword id="KW-1003">Cell membrane</keyword>
<keyword id="KW-0186">Copper</keyword>
<keyword id="KW-1015">Disulfide bond</keyword>
<keyword id="KW-0325">Glycoprotein</keyword>
<keyword id="KW-0333">Golgi apparatus</keyword>
<keyword id="KW-0336">GPI-anchor</keyword>
<keyword id="KW-0449">Lipoprotein</keyword>
<keyword id="KW-0472">Membrane</keyword>
<keyword id="KW-0479">Metal-binding</keyword>
<keyword id="KW-0640">Prion</keyword>
<keyword id="KW-0677">Repeat</keyword>
<keyword id="KW-0732">Signal</keyword>
<keyword id="KW-0862">Zinc</keyword>
<feature type="signal peptide" evidence="1">
    <location>
        <begin position="1"/>
        <end position="24"/>
    </location>
</feature>
<feature type="chain" id="PRO_0000025621" description="Major prion protein">
    <location>
        <begin position="25"/>
        <end position="241"/>
    </location>
</feature>
<feature type="propeptide" id="PRO_0000025622" description="Removed in mature form" evidence="5">
    <location>
        <begin position="242"/>
        <end position="264"/>
    </location>
</feature>
<feature type="repeat" description="1">
    <location>
        <begin position="54"/>
        <end position="62"/>
    </location>
</feature>
<feature type="repeat" description="2">
    <location>
        <begin position="63"/>
        <end position="70"/>
    </location>
</feature>
<feature type="repeat" description="3">
    <location>
        <begin position="71"/>
        <end position="78"/>
    </location>
</feature>
<feature type="repeat" description="4">
    <location>
        <begin position="79"/>
        <end position="86"/>
    </location>
</feature>
<feature type="repeat" description="5">
    <location>
        <begin position="87"/>
        <end position="94"/>
    </location>
</feature>
<feature type="repeat" description="6">
    <location>
        <begin position="95"/>
        <end position="103"/>
    </location>
</feature>
<feature type="region of interest" description="Interaction with GRB2, ERI3 and SYN1" evidence="4">
    <location>
        <begin position="25"/>
        <end position="241"/>
    </location>
</feature>
<feature type="region of interest" description="Disordered" evidence="6">
    <location>
        <begin position="28"/>
        <end position="119"/>
    </location>
</feature>
<feature type="region of interest" description="6 X 8 AA tandem repeats of P-H-G-G-G-W-G-Q">
    <location>
        <begin position="54"/>
        <end position="103"/>
    </location>
</feature>
<feature type="compositionally biased region" description="Gly residues" evidence="6">
    <location>
        <begin position="55"/>
        <end position="107"/>
    </location>
</feature>
<feature type="binding site" evidence="2">
    <location>
        <position position="72"/>
    </location>
    <ligand>
        <name>Cu(2+)</name>
        <dbReference type="ChEBI" id="CHEBI:29036"/>
        <label>1</label>
    </ligand>
</feature>
<feature type="binding site" evidence="2">
    <location>
        <position position="73"/>
    </location>
    <ligand>
        <name>Cu(2+)</name>
        <dbReference type="ChEBI" id="CHEBI:29036"/>
        <label>1</label>
    </ligand>
</feature>
<feature type="binding site" evidence="2">
    <location>
        <position position="74"/>
    </location>
    <ligand>
        <name>Cu(2+)</name>
        <dbReference type="ChEBI" id="CHEBI:29036"/>
        <label>1</label>
    </ligand>
</feature>
<feature type="binding site" evidence="2">
    <location>
        <position position="80"/>
    </location>
    <ligand>
        <name>Cu(2+)</name>
        <dbReference type="ChEBI" id="CHEBI:29036"/>
        <label>2</label>
    </ligand>
</feature>
<feature type="binding site" evidence="2">
    <location>
        <position position="81"/>
    </location>
    <ligand>
        <name>Cu(2+)</name>
        <dbReference type="ChEBI" id="CHEBI:29036"/>
        <label>2</label>
    </ligand>
</feature>
<feature type="binding site" evidence="2">
    <location>
        <position position="82"/>
    </location>
    <ligand>
        <name>Cu(2+)</name>
        <dbReference type="ChEBI" id="CHEBI:29036"/>
        <label>2</label>
    </ligand>
</feature>
<feature type="binding site" evidence="2">
    <location>
        <position position="88"/>
    </location>
    <ligand>
        <name>Cu(2+)</name>
        <dbReference type="ChEBI" id="CHEBI:29036"/>
        <label>3</label>
    </ligand>
</feature>
<feature type="binding site" evidence="2">
    <location>
        <position position="89"/>
    </location>
    <ligand>
        <name>Cu(2+)</name>
        <dbReference type="ChEBI" id="CHEBI:29036"/>
        <label>3</label>
    </ligand>
</feature>
<feature type="binding site" evidence="2">
    <location>
        <position position="90"/>
    </location>
    <ligand>
        <name>Cu(2+)</name>
        <dbReference type="ChEBI" id="CHEBI:29036"/>
        <label>3</label>
    </ligand>
</feature>
<feature type="binding site" evidence="2">
    <location>
        <position position="96"/>
    </location>
    <ligand>
        <name>Cu(2+)</name>
        <dbReference type="ChEBI" id="CHEBI:29036"/>
        <label>4</label>
    </ligand>
</feature>
<feature type="binding site" evidence="2">
    <location>
        <position position="98"/>
    </location>
    <ligand>
        <name>Cu(2+)</name>
        <dbReference type="ChEBI" id="CHEBI:29036"/>
        <label>4</label>
    </ligand>
</feature>
<feature type="binding site" evidence="2">
    <location>
        <position position="99"/>
    </location>
    <ligand>
        <name>Cu(2+)</name>
        <dbReference type="ChEBI" id="CHEBI:29036"/>
        <label>4</label>
    </ligand>
</feature>
<feature type="lipid moiety-binding region" description="GPI-anchor amidated alanine" evidence="5">
    <location>
        <position position="241"/>
    </location>
</feature>
<feature type="glycosylation site" description="N-linked (GlcNAc...) asparagine" evidence="5">
    <location>
        <position position="192"/>
    </location>
</feature>
<feature type="glycosylation site" description="N-linked (GlcNAc...) asparagine" evidence="5">
    <location>
        <position position="208"/>
    </location>
</feature>
<feature type="disulfide bond" evidence="3">
    <location>
        <begin position="190"/>
        <end position="225"/>
    </location>
</feature>
<evidence type="ECO:0000250" key="1"/>
<evidence type="ECO:0000250" key="2">
    <source>
        <dbReference type="UniProtKB" id="P04156"/>
    </source>
</evidence>
<evidence type="ECO:0000250" key="3">
    <source>
        <dbReference type="UniProtKB" id="P04273"/>
    </source>
</evidence>
<evidence type="ECO:0000250" key="4">
    <source>
        <dbReference type="UniProtKB" id="P04925"/>
    </source>
</evidence>
<evidence type="ECO:0000255" key="5"/>
<evidence type="ECO:0000256" key="6">
    <source>
        <dbReference type="SAM" id="MobiDB-lite"/>
    </source>
</evidence>
<evidence type="ECO:0000305" key="7"/>
<reference key="1">
    <citation type="journal article" date="2004" name="Proc. Natl. Acad. Sci. U.S.A.">
        <title>Prion protein gene (PRNP) variants and evidence for strong purifying selection in functionally important regions of bovine exon 3.</title>
        <authorList>
            <person name="Seabury C.M."/>
            <person name="Honeycutt R.L."/>
            <person name="Rooney A.P."/>
            <person name="Halbert N.D."/>
            <person name="Derr J.N."/>
        </authorList>
    </citation>
    <scope>NUCLEOTIDE SEQUENCE [GENOMIC DNA]</scope>
    <source>
        <strain>Isolate GaurhomoA</strain>
        <strain>Isolate GaurhomoB</strain>
    </source>
</reference>
<gene>
    <name type="primary">PRNP</name>
    <name type="synonym">PRP</name>
</gene>
<dbReference type="EMBL" id="AY720697">
    <property type="protein sequence ID" value="AAV30504.1"/>
    <property type="molecule type" value="Genomic_DNA"/>
</dbReference>
<dbReference type="EMBL" id="AY720698">
    <property type="protein sequence ID" value="AAV30505.1"/>
    <property type="molecule type" value="Genomic_DNA"/>
</dbReference>
<dbReference type="BMRB" id="Q5UJH0"/>
<dbReference type="SMR" id="Q5UJH0"/>
<dbReference type="GlyCosmos" id="Q5UJH0">
    <property type="glycosylation" value="2 sites, No reported glycans"/>
</dbReference>
<dbReference type="GO" id="GO:0005794">
    <property type="term" value="C:Golgi apparatus"/>
    <property type="evidence" value="ECO:0007669"/>
    <property type="project" value="UniProtKB-SubCell"/>
</dbReference>
<dbReference type="GO" id="GO:0005886">
    <property type="term" value="C:plasma membrane"/>
    <property type="evidence" value="ECO:0007669"/>
    <property type="project" value="UniProtKB-SubCell"/>
</dbReference>
<dbReference type="GO" id="GO:0098552">
    <property type="term" value="C:side of membrane"/>
    <property type="evidence" value="ECO:0007669"/>
    <property type="project" value="UniProtKB-KW"/>
</dbReference>
<dbReference type="GO" id="GO:0005507">
    <property type="term" value="F:copper ion binding"/>
    <property type="evidence" value="ECO:0000250"/>
    <property type="project" value="UniProtKB"/>
</dbReference>
<dbReference type="GO" id="GO:0051260">
    <property type="term" value="P:protein homooligomerization"/>
    <property type="evidence" value="ECO:0007669"/>
    <property type="project" value="InterPro"/>
</dbReference>
<dbReference type="FunFam" id="1.10.790.10:FF:000001">
    <property type="entry name" value="Major prion protein"/>
    <property type="match status" value="1"/>
</dbReference>
<dbReference type="Gene3D" id="1.10.790.10">
    <property type="entry name" value="Prion/Doppel protein, beta-ribbon domain"/>
    <property type="match status" value="1"/>
</dbReference>
<dbReference type="InterPro" id="IPR000817">
    <property type="entry name" value="Prion"/>
</dbReference>
<dbReference type="InterPro" id="IPR036924">
    <property type="entry name" value="Prion/Doppel_b-ribbon_dom_sf"/>
</dbReference>
<dbReference type="InterPro" id="IPR022416">
    <property type="entry name" value="Prion/Doppel_prot_b-ribbon_dom"/>
</dbReference>
<dbReference type="InterPro" id="IPR020949">
    <property type="entry name" value="Prion_copper_b_octapeptide"/>
</dbReference>
<dbReference type="InterPro" id="IPR025860">
    <property type="entry name" value="Prion_N"/>
</dbReference>
<dbReference type="PANTHER" id="PTHR15506">
    <property type="entry name" value="DOPPEL PRION"/>
    <property type="match status" value="1"/>
</dbReference>
<dbReference type="PANTHER" id="PTHR15506:SF2">
    <property type="entry name" value="MAJOR PRION PROTEIN"/>
    <property type="match status" value="1"/>
</dbReference>
<dbReference type="Pfam" id="PF00377">
    <property type="entry name" value="Prion"/>
    <property type="match status" value="1"/>
</dbReference>
<dbReference type="Pfam" id="PF11587">
    <property type="entry name" value="Prion_bPrPp"/>
    <property type="match status" value="1"/>
</dbReference>
<dbReference type="Pfam" id="PF03991">
    <property type="entry name" value="Prion_octapep"/>
    <property type="match status" value="1"/>
</dbReference>
<dbReference type="PRINTS" id="PR00341">
    <property type="entry name" value="PRION"/>
</dbReference>
<dbReference type="SMART" id="SM00157">
    <property type="entry name" value="PRP"/>
    <property type="match status" value="1"/>
</dbReference>
<dbReference type="SUPFAM" id="SSF54098">
    <property type="entry name" value="Prion-like"/>
    <property type="match status" value="1"/>
</dbReference>
<dbReference type="PROSITE" id="PS00291">
    <property type="entry name" value="PRION_1"/>
    <property type="match status" value="1"/>
</dbReference>
<dbReference type="PROSITE" id="PS00706">
    <property type="entry name" value="PRION_2"/>
    <property type="match status" value="1"/>
</dbReference>
<organism>
    <name type="scientific">Bos gaurus</name>
    <name type="common">Seladang</name>
    <name type="synonym">Indian bison</name>
    <dbReference type="NCBI Taxonomy" id="9904"/>
    <lineage>
        <taxon>Eukaryota</taxon>
        <taxon>Metazoa</taxon>
        <taxon>Chordata</taxon>
        <taxon>Craniata</taxon>
        <taxon>Vertebrata</taxon>
        <taxon>Euteleostomi</taxon>
        <taxon>Mammalia</taxon>
        <taxon>Eutheria</taxon>
        <taxon>Laurasiatheria</taxon>
        <taxon>Artiodactyla</taxon>
        <taxon>Ruminantia</taxon>
        <taxon>Pecora</taxon>
        <taxon>Bovidae</taxon>
        <taxon>Bovinae</taxon>
        <taxon>Bos</taxon>
    </lineage>
</organism>
<accession>Q5UJH0</accession>
<comment type="function">
    <text evidence="2 4">Its primary physiological function is unclear. Has cytoprotective activity against internal or environmental stresses. May play a role in neuronal development and synaptic plasticity. May be required for neuronal myelin sheath maintenance. May play a role in iron uptake and iron homeostasis. Soluble oligomers are toxic to cultured neuroblastoma cells and induce apoptosis (in vitro). Association with GPC1 (via its heparan sulfate chains) targets PRNP to lipid rafts. Also provides Cu(2+) or Zn(2+) for the ascorbate-mediated GPC1 deaminase degradation of its heparan sulfate side chains (By similarity).</text>
</comment>
<comment type="subunit">
    <text evidence="2 4">Monomer and homodimer. Has a tendency to aggregate into amyloid fibrils containing a cross-beta spine, formed by a steric zipper of superposed beta-strands. Soluble oligomers may represent an intermediate stage on the path to fibril formation. Copper binding may promote oligomerization. Interacts with GRB2, APP, ERI3/PRNPIP and SYN1. Mislocalized cytosolically exposed PrP interacts with MGRN1; this interaction alters MGRN1 subcellular location and causes lysosomal enlargement. Interacts with KIAA1191.</text>
</comment>
<comment type="subcellular location">
    <subcellularLocation>
        <location evidence="2">Cell membrane</location>
        <topology evidence="2">Lipid-anchor</topology>
        <topology evidence="2">GPI-anchor</topology>
    </subcellularLocation>
    <subcellularLocation>
        <location evidence="4">Golgi apparatus</location>
    </subcellularLocation>
    <text evidence="2">Targeted to lipid rafts via association with the heparan sulfate chains of GPC1. Colocates, in the presence of Cu(2+), to vesicles in para- and perinuclear regions, where both proteins undergo internalization. Heparin displaces PRNP from lipid rafts and promotes endocytosis.</text>
</comment>
<comment type="domain">
    <text evidence="2">The normal, monomeric form has a mainly alpha-helical structure. The disease-associated, protease-resistant form forms amyloid fibrils containing a cross-beta spine, formed by a steric zipper of superposed beta-strands. Disease mutations may favor intermolecular contacts via short beta strands, and may thereby trigger oligomerization.</text>
</comment>
<comment type="domain">
    <text evidence="2">Contains an N-terminal region composed of octamer repeats. At low copper concentrations, the sidechains of His residues from three or four repeats contribute to the binding of a single copper ion. Alternatively, a copper ion can be bound by interaction with the sidechain and backbone amide nitrogen of a single His residue. The observed copper binding stoichiometry suggests that two repeat regions cooperate to stabilize the binding of a single copper ion. At higher copper concentrations, each octamer can bind one copper ion by interactions with the His sidechain and Gly backbone atoms. A mixture of binding types may occur, especially in the case of octamer repeat expansion. Copper binding may stabilize the conformation of this region and may promote oligomerization.</text>
</comment>
<comment type="disease">
    <text evidence="7">Variations in PRNP are responsible of transmissible bovine spongiform encephalopathies (BSE), a class of neurodegenerative diseases that affect various mammals. These diseases are caused by abnormally folded prion proteins. BSE can be subdivided into at least three groups: classical, H-type and L-type, with the latter 2 collectively referred to as atypical BSE. Susceptibility or resistance to a BSE disease can be influenced by at least 3 factors related to the host prion protein: protein expression levels, number of octapeptide repeats, and specific polymorphisms. In cattle, as in humans, BSEs can occur as infectious, spontaneous and genetic diseases.</text>
</comment>
<comment type="similarity">
    <text evidence="7">Belongs to the prion family.</text>
</comment>